<protein>
    <recommendedName>
        <fullName evidence="1">N-succinylglutamate 5-semialdehyde dehydrogenase</fullName>
        <ecNumber evidence="1">1.2.1.71</ecNumber>
    </recommendedName>
    <alternativeName>
        <fullName evidence="1">Succinylglutamic semialdehyde dehydrogenase</fullName>
        <shortName evidence="1">SGSD</shortName>
    </alternativeName>
</protein>
<accession>Q5ZUT5</accession>
<comment type="function">
    <text evidence="1">Catalyzes the NAD-dependent reduction of succinylglutamate semialdehyde into succinylglutamate.</text>
</comment>
<comment type="catalytic activity">
    <reaction evidence="1">
        <text>N-succinyl-L-glutamate 5-semialdehyde + NAD(+) + H2O = N-succinyl-L-glutamate + NADH + 2 H(+)</text>
        <dbReference type="Rhea" id="RHEA:10812"/>
        <dbReference type="ChEBI" id="CHEBI:15377"/>
        <dbReference type="ChEBI" id="CHEBI:15378"/>
        <dbReference type="ChEBI" id="CHEBI:57540"/>
        <dbReference type="ChEBI" id="CHEBI:57945"/>
        <dbReference type="ChEBI" id="CHEBI:58520"/>
        <dbReference type="ChEBI" id="CHEBI:58763"/>
        <dbReference type="EC" id="1.2.1.71"/>
    </reaction>
</comment>
<comment type="pathway">
    <text evidence="1">Amino-acid degradation; L-arginine degradation via AST pathway; L-glutamate and succinate from L-arginine: step 4/5.</text>
</comment>
<comment type="similarity">
    <text evidence="1">Belongs to the aldehyde dehydrogenase family. AstD subfamily.</text>
</comment>
<feature type="chain" id="PRO_0000262407" description="N-succinylglutamate 5-semialdehyde dehydrogenase">
    <location>
        <begin position="1"/>
        <end position="496"/>
    </location>
</feature>
<feature type="active site" evidence="1">
    <location>
        <position position="252"/>
    </location>
</feature>
<feature type="active site" evidence="1">
    <location>
        <position position="286"/>
    </location>
</feature>
<feature type="binding site" evidence="1">
    <location>
        <begin position="229"/>
        <end position="234"/>
    </location>
    <ligand>
        <name>NAD(+)</name>
        <dbReference type="ChEBI" id="CHEBI:57540"/>
    </ligand>
</feature>
<evidence type="ECO:0000255" key="1">
    <source>
        <dbReference type="HAMAP-Rule" id="MF_01174"/>
    </source>
</evidence>
<proteinExistence type="inferred from homology"/>
<sequence>MMSKLQIIQSKGQYINGEWIKGNGLILESTNPASGTLLWQGNNATDEEIANACYVAHRALKSWANTSFEERARYTKAFVEQVEKNREQLARLISLETGKPLWESQTEVSSVIGKVNLSIQAYQERTWPKQTETAEANACLRFKPHGIVVVLGAFNFPAHLSNGHIVPALLAGNTVLYKPSEHTPAVAELIIQCWHDSGLPPGVINCLQGNANCGNTLLSQDIQGVYFTGSYATGLRIHQQFCNRPEVILALEMGGNNPLVIDEVKDIDAAVYHTILSTMITAGQRCTCARRIIIPDSQTGDLFLERFAKACKLMRIGSFDSQPEPFIGPVISHVQALKHLHAQKQLIEMGGEIILPMSLLLEYTGLVSPGIIDMTRAKNPPDEEIFAPFAQIYRYNHFDEAIQLANQTRYGLSAGLLSDNKDHYQQFYQNIRAGLINWNRPTTGAASSLPFGGVGCSGNHRPSAYFAADYCAYPVASMEQPLLTTPVQRLPGLVLE</sequence>
<organism>
    <name type="scientific">Legionella pneumophila subsp. pneumophila (strain Philadelphia 1 / ATCC 33152 / DSM 7513)</name>
    <dbReference type="NCBI Taxonomy" id="272624"/>
    <lineage>
        <taxon>Bacteria</taxon>
        <taxon>Pseudomonadati</taxon>
        <taxon>Pseudomonadota</taxon>
        <taxon>Gammaproteobacteria</taxon>
        <taxon>Legionellales</taxon>
        <taxon>Legionellaceae</taxon>
        <taxon>Legionella</taxon>
    </lineage>
</organism>
<gene>
    <name evidence="1" type="primary">astD</name>
    <name type="ordered locus">lpg1707</name>
</gene>
<keyword id="KW-0056">Arginine metabolism</keyword>
<keyword id="KW-0520">NAD</keyword>
<keyword id="KW-0560">Oxidoreductase</keyword>
<keyword id="KW-1185">Reference proteome</keyword>
<name>ASTD_LEGPH</name>
<reference key="1">
    <citation type="journal article" date="2004" name="Science">
        <title>The genomic sequence of the accidental pathogen Legionella pneumophila.</title>
        <authorList>
            <person name="Chien M."/>
            <person name="Morozova I."/>
            <person name="Shi S."/>
            <person name="Sheng H."/>
            <person name="Chen J."/>
            <person name="Gomez S.M."/>
            <person name="Asamani G."/>
            <person name="Hill K."/>
            <person name="Nuara J."/>
            <person name="Feder M."/>
            <person name="Rineer J."/>
            <person name="Greenberg J.J."/>
            <person name="Steshenko V."/>
            <person name="Park S.H."/>
            <person name="Zhao B."/>
            <person name="Teplitskaya E."/>
            <person name="Edwards J.R."/>
            <person name="Pampou S."/>
            <person name="Georghiou A."/>
            <person name="Chou I.-C."/>
            <person name="Iannuccilli W."/>
            <person name="Ulz M.E."/>
            <person name="Kim D.H."/>
            <person name="Geringer-Sameth A."/>
            <person name="Goldsberry C."/>
            <person name="Morozov P."/>
            <person name="Fischer S.G."/>
            <person name="Segal G."/>
            <person name="Qu X."/>
            <person name="Rzhetsky A."/>
            <person name="Zhang P."/>
            <person name="Cayanis E."/>
            <person name="De Jong P.J."/>
            <person name="Ju J."/>
            <person name="Kalachikov S."/>
            <person name="Shuman H.A."/>
            <person name="Russo J.J."/>
        </authorList>
    </citation>
    <scope>NUCLEOTIDE SEQUENCE [LARGE SCALE GENOMIC DNA]</scope>
    <source>
        <strain>Philadelphia 1 / ATCC 33152 / DSM 7513</strain>
    </source>
</reference>
<dbReference type="EC" id="1.2.1.71" evidence="1"/>
<dbReference type="EMBL" id="AE017354">
    <property type="protein sequence ID" value="AAU27787.1"/>
    <property type="molecule type" value="Genomic_DNA"/>
</dbReference>
<dbReference type="RefSeq" id="YP_095734.1">
    <property type="nucleotide sequence ID" value="NC_002942.5"/>
</dbReference>
<dbReference type="SMR" id="Q5ZUT5"/>
<dbReference type="STRING" id="272624.lpg1707"/>
<dbReference type="PaxDb" id="272624-lpg1707"/>
<dbReference type="KEGG" id="lpn:lpg1707"/>
<dbReference type="PATRIC" id="fig|272624.6.peg.1788"/>
<dbReference type="eggNOG" id="COG1012">
    <property type="taxonomic scope" value="Bacteria"/>
</dbReference>
<dbReference type="HOGENOM" id="CLU_005391_1_0_6"/>
<dbReference type="OrthoDB" id="9812625at2"/>
<dbReference type="UniPathway" id="UPA00185">
    <property type="reaction ID" value="UER00282"/>
</dbReference>
<dbReference type="Proteomes" id="UP000000609">
    <property type="component" value="Chromosome"/>
</dbReference>
<dbReference type="GO" id="GO:0009898">
    <property type="term" value="C:cytoplasmic side of plasma membrane"/>
    <property type="evidence" value="ECO:0007669"/>
    <property type="project" value="TreeGrafter"/>
</dbReference>
<dbReference type="GO" id="GO:0003842">
    <property type="term" value="F:1-pyrroline-5-carboxylate dehydrogenase activity"/>
    <property type="evidence" value="ECO:0007669"/>
    <property type="project" value="TreeGrafter"/>
</dbReference>
<dbReference type="GO" id="GO:0043824">
    <property type="term" value="F:succinylglutamate-semialdehyde dehydrogenase activity"/>
    <property type="evidence" value="ECO:0007669"/>
    <property type="project" value="UniProtKB-EC"/>
</dbReference>
<dbReference type="GO" id="GO:0019544">
    <property type="term" value="P:arginine catabolic process to glutamate"/>
    <property type="evidence" value="ECO:0007669"/>
    <property type="project" value="UniProtKB-UniRule"/>
</dbReference>
<dbReference type="GO" id="GO:0019545">
    <property type="term" value="P:arginine catabolic process to succinate"/>
    <property type="evidence" value="ECO:0007669"/>
    <property type="project" value="UniProtKB-UniRule"/>
</dbReference>
<dbReference type="GO" id="GO:0010133">
    <property type="term" value="P:proline catabolic process to glutamate"/>
    <property type="evidence" value="ECO:0007669"/>
    <property type="project" value="TreeGrafter"/>
</dbReference>
<dbReference type="CDD" id="cd07095">
    <property type="entry name" value="ALDH_SGSD_AstD"/>
    <property type="match status" value="1"/>
</dbReference>
<dbReference type="FunFam" id="3.40.605.10:FF:000010">
    <property type="entry name" value="N-succinylglutamate 5-semialdehyde dehydrogenase"/>
    <property type="match status" value="1"/>
</dbReference>
<dbReference type="Gene3D" id="3.40.605.10">
    <property type="entry name" value="Aldehyde Dehydrogenase, Chain A, domain 1"/>
    <property type="match status" value="1"/>
</dbReference>
<dbReference type="Gene3D" id="3.40.309.10">
    <property type="entry name" value="Aldehyde Dehydrogenase, Chain A, domain 2"/>
    <property type="match status" value="1"/>
</dbReference>
<dbReference type="HAMAP" id="MF_01174">
    <property type="entry name" value="Aldedh_AstD"/>
    <property type="match status" value="1"/>
</dbReference>
<dbReference type="InterPro" id="IPR016161">
    <property type="entry name" value="Ald_DH/histidinol_DH"/>
</dbReference>
<dbReference type="InterPro" id="IPR016163">
    <property type="entry name" value="Ald_DH_C"/>
</dbReference>
<dbReference type="InterPro" id="IPR029510">
    <property type="entry name" value="Ald_DH_CS_GLU"/>
</dbReference>
<dbReference type="InterPro" id="IPR016162">
    <property type="entry name" value="Ald_DH_N"/>
</dbReference>
<dbReference type="InterPro" id="IPR015590">
    <property type="entry name" value="Aldehyde_DH_dom"/>
</dbReference>
<dbReference type="InterPro" id="IPR050485">
    <property type="entry name" value="Proline_metab_enzyme"/>
</dbReference>
<dbReference type="InterPro" id="IPR017649">
    <property type="entry name" value="SuccinylGlu_semiald_DH_AstD"/>
</dbReference>
<dbReference type="NCBIfam" id="TIGR03240">
    <property type="entry name" value="arg_catab_astD"/>
    <property type="match status" value="1"/>
</dbReference>
<dbReference type="NCBIfam" id="NF006992">
    <property type="entry name" value="PRK09457.1"/>
    <property type="match status" value="1"/>
</dbReference>
<dbReference type="PANTHER" id="PTHR42862">
    <property type="entry name" value="DELTA-1-PYRROLINE-5-CARBOXYLATE DEHYDROGENASE 1, ISOFORM A-RELATED"/>
    <property type="match status" value="1"/>
</dbReference>
<dbReference type="PANTHER" id="PTHR42862:SF1">
    <property type="entry name" value="DELTA-1-PYRROLINE-5-CARBOXYLATE DEHYDROGENASE 2, ISOFORM A-RELATED"/>
    <property type="match status" value="1"/>
</dbReference>
<dbReference type="Pfam" id="PF00171">
    <property type="entry name" value="Aldedh"/>
    <property type="match status" value="1"/>
</dbReference>
<dbReference type="SUPFAM" id="SSF53720">
    <property type="entry name" value="ALDH-like"/>
    <property type="match status" value="1"/>
</dbReference>
<dbReference type="PROSITE" id="PS00687">
    <property type="entry name" value="ALDEHYDE_DEHYDR_GLU"/>
    <property type="match status" value="1"/>
</dbReference>